<proteinExistence type="evidence at transcript level"/>
<sequence length="492" mass="54455">MAETGSVHATRFEAAVKVIQSLPKNGSFQPTNEMMLKFYSFYKQATQGPCNIPRPGFWDPIGRYKWDAWSALGDMSKEEAMIAYVEEMKKILESMPMTDKVEELLQVIGPFYEIVEDKKNRGSGLTSDLSNVMNSTPNIKAVNGKAESSDSGAESEEEGLREEEEKELQQNVKDCKSPKTESLAAKDLENSVANDCYKDSFIPDMQNGIQTKSALNGLNVEEEIKKTEPSLEIANNCDHRGANEENTEEVSGTQHLTSDSDSEVYCDSMEQLGLEEPLEIITSAKGSLKRSSHFLDVDHRLQLENTDLPRHACTTAGNLQLGTAVDGAVQEKGEVKCGGEDGKASNGAPHKEKKDGEKADFYGVRRGRGHRLHPVGDGSQGGQMGNGGDGERWGSDRGPRGSLNEQIAVVLMRLQEDMQNVLQRLHMLEAVTASQARSATLQSNYQPASSVKKPSWWPFEISPGVLAFAIVWPFIAQWLVHVYLQRKRRKLN</sequence>
<organism>
    <name type="scientific">Gallus gallus</name>
    <name type="common">Chicken</name>
    <dbReference type="NCBI Taxonomy" id="9031"/>
    <lineage>
        <taxon>Eukaryota</taxon>
        <taxon>Metazoa</taxon>
        <taxon>Chordata</taxon>
        <taxon>Craniata</taxon>
        <taxon>Vertebrata</taxon>
        <taxon>Euteleostomi</taxon>
        <taxon>Archelosauria</taxon>
        <taxon>Archosauria</taxon>
        <taxon>Dinosauria</taxon>
        <taxon>Saurischia</taxon>
        <taxon>Theropoda</taxon>
        <taxon>Coelurosauria</taxon>
        <taxon>Aves</taxon>
        <taxon>Neognathae</taxon>
        <taxon>Galloanserae</taxon>
        <taxon>Galliformes</taxon>
        <taxon>Phasianidae</taxon>
        <taxon>Phasianinae</taxon>
        <taxon>Gallus</taxon>
    </lineage>
</organism>
<comment type="function">
    <text evidence="1">Acyl-CoA binding protein which acts as the peroxisome receptor for pexophagy but is dispensable for aggrephagy and nonselective autophagy. Binds medium- and long-chain acyl-CoA esters (By similarity).</text>
</comment>
<comment type="subcellular location">
    <subcellularLocation>
        <location evidence="1">Peroxisome membrane</location>
        <topology evidence="1">Single-pass membrane protein</topology>
    </subcellularLocation>
</comment>
<comment type="similarity">
    <text evidence="5">Belongs to the ATG37 family.</text>
</comment>
<dbReference type="EMBL" id="AJ721078">
    <property type="protein sequence ID" value="CAG32737.1"/>
    <property type="molecule type" value="mRNA"/>
</dbReference>
<dbReference type="RefSeq" id="NP_001006356.1">
    <property type="nucleotide sequence ID" value="NM_001006356.1"/>
</dbReference>
<dbReference type="SMR" id="Q5ZHQ6"/>
<dbReference type="FunCoup" id="Q5ZHQ6">
    <property type="interactions" value="356"/>
</dbReference>
<dbReference type="STRING" id="9031.ENSGALP00000053041"/>
<dbReference type="PaxDb" id="9031-ENSGALP00000012144"/>
<dbReference type="GeneID" id="420488"/>
<dbReference type="KEGG" id="gga:420488"/>
<dbReference type="CTD" id="91452"/>
<dbReference type="VEuPathDB" id="HostDB:geneid_420488"/>
<dbReference type="eggNOG" id="KOG0817">
    <property type="taxonomic scope" value="Eukaryota"/>
</dbReference>
<dbReference type="InParanoid" id="Q5ZHQ6"/>
<dbReference type="OrthoDB" id="71307at2759"/>
<dbReference type="PhylomeDB" id="Q5ZHQ6"/>
<dbReference type="PRO" id="PR:Q5ZHQ6"/>
<dbReference type="Proteomes" id="UP000000539">
    <property type="component" value="Unassembled WGS sequence"/>
</dbReference>
<dbReference type="GO" id="GO:0005737">
    <property type="term" value="C:cytoplasm"/>
    <property type="evidence" value="ECO:0000318"/>
    <property type="project" value="GO_Central"/>
</dbReference>
<dbReference type="GO" id="GO:0005778">
    <property type="term" value="C:peroxisomal membrane"/>
    <property type="evidence" value="ECO:0007669"/>
    <property type="project" value="UniProtKB-SubCell"/>
</dbReference>
<dbReference type="GO" id="GO:0005777">
    <property type="term" value="C:peroxisome"/>
    <property type="evidence" value="ECO:0000318"/>
    <property type="project" value="GO_Central"/>
</dbReference>
<dbReference type="GO" id="GO:0000062">
    <property type="term" value="F:fatty-acyl-CoA binding"/>
    <property type="evidence" value="ECO:0000318"/>
    <property type="project" value="GO_Central"/>
</dbReference>
<dbReference type="GO" id="GO:0006631">
    <property type="term" value="P:fatty acid metabolic process"/>
    <property type="evidence" value="ECO:0000318"/>
    <property type="project" value="GO_Central"/>
</dbReference>
<dbReference type="GO" id="GO:0000425">
    <property type="term" value="P:pexophagy"/>
    <property type="evidence" value="ECO:0007669"/>
    <property type="project" value="InterPro"/>
</dbReference>
<dbReference type="CDD" id="cd00435">
    <property type="entry name" value="ACBP"/>
    <property type="match status" value="1"/>
</dbReference>
<dbReference type="FunFam" id="1.20.80.10:FF:000010">
    <property type="entry name" value="Acyl-CoA-binding domain-containing protein 5"/>
    <property type="match status" value="1"/>
</dbReference>
<dbReference type="Gene3D" id="1.20.80.10">
    <property type="match status" value="1"/>
</dbReference>
<dbReference type="InterPro" id="IPR016347">
    <property type="entry name" value="ACBD5"/>
</dbReference>
<dbReference type="InterPro" id="IPR022408">
    <property type="entry name" value="Acyl-CoA-binding_prot_CS"/>
</dbReference>
<dbReference type="InterPro" id="IPR000582">
    <property type="entry name" value="Acyl-CoA-binding_protein"/>
</dbReference>
<dbReference type="InterPro" id="IPR035984">
    <property type="entry name" value="Acyl-CoA-binding_sf"/>
</dbReference>
<dbReference type="InterPro" id="IPR014352">
    <property type="entry name" value="FERM/acyl-CoA-bd_prot_sf"/>
</dbReference>
<dbReference type="PANTHER" id="PTHR23310:SF6">
    <property type="entry name" value="ACYL-COA-BINDING DOMAIN-CONTAINING PROTEIN 5"/>
    <property type="match status" value="1"/>
</dbReference>
<dbReference type="PANTHER" id="PTHR23310">
    <property type="entry name" value="ACYL-COA-BINDING PROTEIN, ACBP"/>
    <property type="match status" value="1"/>
</dbReference>
<dbReference type="Pfam" id="PF00887">
    <property type="entry name" value="ACBP"/>
    <property type="match status" value="1"/>
</dbReference>
<dbReference type="PIRSF" id="PIRSF002412">
    <property type="entry name" value="MA_DBI"/>
    <property type="match status" value="1"/>
</dbReference>
<dbReference type="PRINTS" id="PR00689">
    <property type="entry name" value="ACOABINDINGP"/>
</dbReference>
<dbReference type="SUPFAM" id="SSF47027">
    <property type="entry name" value="Acyl-CoA binding protein"/>
    <property type="match status" value="1"/>
</dbReference>
<dbReference type="PROSITE" id="PS00880">
    <property type="entry name" value="ACB_1"/>
    <property type="match status" value="1"/>
</dbReference>
<dbReference type="PROSITE" id="PS51228">
    <property type="entry name" value="ACB_2"/>
    <property type="match status" value="1"/>
</dbReference>
<reference key="1">
    <citation type="journal article" date="2005" name="Genome Biol.">
        <title>Full-length cDNAs from chicken bursal lymphocytes to facilitate gene function analysis.</title>
        <authorList>
            <person name="Caldwell R.B."/>
            <person name="Kierzek A.M."/>
            <person name="Arakawa H."/>
            <person name="Bezzubov Y."/>
            <person name="Zaim J."/>
            <person name="Fiedler P."/>
            <person name="Kutter S."/>
            <person name="Blagodatski A."/>
            <person name="Kostovska D."/>
            <person name="Koter M."/>
            <person name="Plachy J."/>
            <person name="Carninci P."/>
            <person name="Hayashizaki Y."/>
            <person name="Buerstedde J.-M."/>
        </authorList>
    </citation>
    <scope>NUCLEOTIDE SEQUENCE [LARGE SCALE MRNA]</scope>
    <source>
        <strain>CB</strain>
        <tissue>Bursa of Fabricius</tissue>
    </source>
</reference>
<accession>Q5ZHQ6</accession>
<evidence type="ECO:0000250" key="1"/>
<evidence type="ECO:0000255" key="2"/>
<evidence type="ECO:0000255" key="3">
    <source>
        <dbReference type="PROSITE-ProRule" id="PRU00573"/>
    </source>
</evidence>
<evidence type="ECO:0000256" key="4">
    <source>
        <dbReference type="SAM" id="MobiDB-lite"/>
    </source>
</evidence>
<evidence type="ECO:0000305" key="5"/>
<keyword id="KW-0072">Autophagy</keyword>
<keyword id="KW-0175">Coiled coil</keyword>
<keyword id="KW-0446">Lipid-binding</keyword>
<keyword id="KW-0472">Membrane</keyword>
<keyword id="KW-0576">Peroxisome</keyword>
<keyword id="KW-1185">Reference proteome</keyword>
<keyword id="KW-0812">Transmembrane</keyword>
<keyword id="KW-1133">Transmembrane helix</keyword>
<keyword id="KW-0813">Transport</keyword>
<feature type="chain" id="PRO_0000287381" description="Acyl-CoA-binding domain-containing protein 5">
    <location>
        <begin position="1"/>
        <end position="492"/>
    </location>
</feature>
<feature type="transmembrane region" description="Helical" evidence="2">
    <location>
        <begin position="464"/>
        <end position="484"/>
    </location>
</feature>
<feature type="domain" description="ACB" evidence="3">
    <location>
        <begin position="8"/>
        <end position="97"/>
    </location>
</feature>
<feature type="region of interest" description="Disordered" evidence="4">
    <location>
        <begin position="141"/>
        <end position="162"/>
    </location>
</feature>
<feature type="region of interest" description="Disordered" evidence="4">
    <location>
        <begin position="335"/>
        <end position="399"/>
    </location>
</feature>
<feature type="coiled-coil region" evidence="2">
    <location>
        <begin position="405"/>
        <end position="431"/>
    </location>
</feature>
<feature type="compositionally biased region" description="Acidic residues" evidence="4">
    <location>
        <begin position="153"/>
        <end position="162"/>
    </location>
</feature>
<feature type="compositionally biased region" description="Basic and acidic residues" evidence="4">
    <location>
        <begin position="335"/>
        <end position="360"/>
    </location>
</feature>
<feature type="compositionally biased region" description="Gly residues" evidence="4">
    <location>
        <begin position="378"/>
        <end position="388"/>
    </location>
</feature>
<feature type="compositionally biased region" description="Basic and acidic residues" evidence="4">
    <location>
        <begin position="389"/>
        <end position="399"/>
    </location>
</feature>
<feature type="binding site" evidence="1">
    <location>
        <begin position="19"/>
        <end position="28"/>
    </location>
    <ligand>
        <name>an acyl-CoA</name>
        <dbReference type="ChEBI" id="CHEBI:58342"/>
    </ligand>
</feature>
<feature type="binding site" evidence="1">
    <location>
        <begin position="39"/>
        <end position="43"/>
    </location>
    <ligand>
        <name>an acyl-CoA</name>
        <dbReference type="ChEBI" id="CHEBI:58342"/>
    </ligand>
</feature>
<feature type="binding site" evidence="1">
    <location>
        <position position="65"/>
    </location>
    <ligand>
        <name>an acyl-CoA</name>
        <dbReference type="ChEBI" id="CHEBI:58342"/>
    </ligand>
</feature>
<feature type="binding site" evidence="1">
    <location>
        <position position="84"/>
    </location>
    <ligand>
        <name>an acyl-CoA</name>
        <dbReference type="ChEBI" id="CHEBI:58342"/>
    </ligand>
</feature>
<gene>
    <name type="primary">ACBD5</name>
    <name type="ORF">RCJMB04_34h15</name>
</gene>
<protein>
    <recommendedName>
        <fullName>Acyl-CoA-binding domain-containing protein 5</fullName>
    </recommendedName>
</protein>
<name>ACBD5_CHICK</name>